<feature type="chain" id="PRO_1000126454" description="Small ribosomal subunit protein bS20">
    <location>
        <begin position="1"/>
        <end position="89"/>
    </location>
</feature>
<gene>
    <name evidence="1" type="primary">rpsT</name>
    <name type="ordered locus">HPP12_0080</name>
</gene>
<name>RS20_HELP2</name>
<organism>
    <name type="scientific">Helicobacter pylori (strain P12)</name>
    <dbReference type="NCBI Taxonomy" id="570508"/>
    <lineage>
        <taxon>Bacteria</taxon>
        <taxon>Pseudomonadati</taxon>
        <taxon>Campylobacterota</taxon>
        <taxon>Epsilonproteobacteria</taxon>
        <taxon>Campylobacterales</taxon>
        <taxon>Helicobacteraceae</taxon>
        <taxon>Helicobacter</taxon>
    </lineage>
</organism>
<comment type="function">
    <text evidence="1">Binds directly to 16S ribosomal RNA.</text>
</comment>
<comment type="similarity">
    <text evidence="1">Belongs to the bacterial ribosomal protein bS20 family.</text>
</comment>
<accession>B6JPH9</accession>
<reference key="1">
    <citation type="submission" date="2008-10" db="EMBL/GenBank/DDBJ databases">
        <title>The complete genome sequence of Helicobacter pylori strain P12.</title>
        <authorList>
            <person name="Fischer W."/>
            <person name="Windhager L."/>
            <person name="Karnholz A."/>
            <person name="Zeiller M."/>
            <person name="Zimmer R."/>
            <person name="Haas R."/>
        </authorList>
    </citation>
    <scope>NUCLEOTIDE SEQUENCE [LARGE SCALE GENOMIC DNA]</scope>
    <source>
        <strain>P12</strain>
    </source>
</reference>
<proteinExistence type="inferred from homology"/>
<sequence>MANHKSAEKRIRQTIKRTERNRFYKTKVKNIIKAVREAVAINDVAKAQERLKIANKELHKFVSKGILKKNTASRKVSRLNASVKKIALA</sequence>
<protein>
    <recommendedName>
        <fullName evidence="1">Small ribosomal subunit protein bS20</fullName>
    </recommendedName>
    <alternativeName>
        <fullName evidence="2">30S ribosomal protein S20</fullName>
    </alternativeName>
</protein>
<keyword id="KW-0687">Ribonucleoprotein</keyword>
<keyword id="KW-0689">Ribosomal protein</keyword>
<keyword id="KW-0694">RNA-binding</keyword>
<keyword id="KW-0699">rRNA-binding</keyword>
<dbReference type="EMBL" id="CP001217">
    <property type="protein sequence ID" value="ACJ07240.1"/>
    <property type="molecule type" value="Genomic_DNA"/>
</dbReference>
<dbReference type="SMR" id="B6JPH9"/>
<dbReference type="KEGG" id="hpp:HPP12_0080"/>
<dbReference type="HOGENOM" id="CLU_160655_3_0_7"/>
<dbReference type="Proteomes" id="UP000008198">
    <property type="component" value="Chromosome"/>
</dbReference>
<dbReference type="GO" id="GO:0005829">
    <property type="term" value="C:cytosol"/>
    <property type="evidence" value="ECO:0007669"/>
    <property type="project" value="TreeGrafter"/>
</dbReference>
<dbReference type="GO" id="GO:0015935">
    <property type="term" value="C:small ribosomal subunit"/>
    <property type="evidence" value="ECO:0007669"/>
    <property type="project" value="TreeGrafter"/>
</dbReference>
<dbReference type="GO" id="GO:0070181">
    <property type="term" value="F:small ribosomal subunit rRNA binding"/>
    <property type="evidence" value="ECO:0007669"/>
    <property type="project" value="TreeGrafter"/>
</dbReference>
<dbReference type="GO" id="GO:0003735">
    <property type="term" value="F:structural constituent of ribosome"/>
    <property type="evidence" value="ECO:0007669"/>
    <property type="project" value="InterPro"/>
</dbReference>
<dbReference type="GO" id="GO:0006412">
    <property type="term" value="P:translation"/>
    <property type="evidence" value="ECO:0007669"/>
    <property type="project" value="UniProtKB-UniRule"/>
</dbReference>
<dbReference type="FunFam" id="1.20.58.110:FF:000001">
    <property type="entry name" value="30S ribosomal protein S20"/>
    <property type="match status" value="1"/>
</dbReference>
<dbReference type="Gene3D" id="1.20.58.110">
    <property type="entry name" value="Ribosomal protein S20"/>
    <property type="match status" value="1"/>
</dbReference>
<dbReference type="HAMAP" id="MF_00500">
    <property type="entry name" value="Ribosomal_bS20"/>
    <property type="match status" value="1"/>
</dbReference>
<dbReference type="InterPro" id="IPR002583">
    <property type="entry name" value="Ribosomal_bS20"/>
</dbReference>
<dbReference type="InterPro" id="IPR036510">
    <property type="entry name" value="Ribosomal_bS20_sf"/>
</dbReference>
<dbReference type="NCBIfam" id="TIGR00029">
    <property type="entry name" value="S20"/>
    <property type="match status" value="1"/>
</dbReference>
<dbReference type="PANTHER" id="PTHR33398">
    <property type="entry name" value="30S RIBOSOMAL PROTEIN S20"/>
    <property type="match status" value="1"/>
</dbReference>
<dbReference type="PANTHER" id="PTHR33398:SF1">
    <property type="entry name" value="SMALL RIBOSOMAL SUBUNIT PROTEIN BS20C"/>
    <property type="match status" value="1"/>
</dbReference>
<dbReference type="Pfam" id="PF01649">
    <property type="entry name" value="Ribosomal_S20p"/>
    <property type="match status" value="1"/>
</dbReference>
<dbReference type="SUPFAM" id="SSF46992">
    <property type="entry name" value="Ribosomal protein S20"/>
    <property type="match status" value="1"/>
</dbReference>
<evidence type="ECO:0000255" key="1">
    <source>
        <dbReference type="HAMAP-Rule" id="MF_00500"/>
    </source>
</evidence>
<evidence type="ECO:0000305" key="2"/>